<evidence type="ECO:0000269" key="1">
    <source>
    </source>
</evidence>
<evidence type="ECO:0000269" key="2">
    <source>
    </source>
</evidence>
<evidence type="ECO:0000269" key="3">
    <source>
    </source>
</evidence>
<evidence type="ECO:0000269" key="4">
    <source>
    </source>
</evidence>
<evidence type="ECO:0000305" key="5"/>
<geneLocation type="plasmid">
    <name>IncP-alpha RP4</name>
</geneLocation>
<geneLocation type="plasmid">
    <name>IncP-alpha RK2</name>
</geneLocation>
<sequence length="103" mass="11716">MTAYILTAEAEADLRGIIRYTRREWGAAQVRRYIAKLEQGIARLAAGEGPFKDMSELFPALRMARCEHHYVFCLPRAGEPALVVAILHERMDLMTRLADRLKG</sequence>
<comment type="function">
    <text evidence="1 2 3 4">Toxin component of a type II toxin-antitoxin (TA) system involved in plasmid partition. Acts by inhibiting DNA gyrase, converting supercoiled plasmid DNA into a singly cleaved linear form in an ATP-dependent fashion. To do so it probably interacts with one of the gyrase subunits. Gyrase inhibition is prevented by antitoxin ParD, and is reversed in vitro by incubation with ParD. In cells that have lost the plasmid filamentation and growth inhibition occur; this is suppressed when ParD is supplied in trans. The parDE operon alone is capable of stabilizing an RK2-derived minireplicon under defined growth conditions in several different Gram-negative bacteria. It does so by the post-segregational killing (PSK) of plasmid-free cells, also referred to as a plasmid addiction system.</text>
</comment>
<comment type="subunit">
    <text evidence="4">Probably forms a homodimer in solution, interacts with ParD, possibly as a ParD(2)-ParE(2) heterotetramer, which neutralizes the toxic activity of ParE. The heterotetramer binds DNA, but not ParE alone.</text>
</comment>
<comment type="disruption phenotype">
    <text evidence="2">Loss of this gene blocks plasmid stabilizing ability.</text>
</comment>
<comment type="miscellaneous">
    <text>Plasmid IncP-alpha RK2 is maintained at 5-8 copies per chromosome.</text>
</comment>
<comment type="similarity">
    <text evidence="5">Belongs to the RelE toxin family.</text>
</comment>
<feature type="chain" id="PRO_0000408371" description="Toxin ParE">
    <location>
        <begin position="1"/>
        <end position="103"/>
    </location>
</feature>
<keyword id="KW-0614">Plasmid</keyword>
<keyword id="KW-0616">Plasmid partition</keyword>
<keyword id="KW-1277">Toxin-antitoxin system</keyword>
<organism>
    <name type="scientific">Escherichia coli</name>
    <dbReference type="NCBI Taxonomy" id="562"/>
    <lineage>
        <taxon>Bacteria</taxon>
        <taxon>Pseudomonadati</taxon>
        <taxon>Pseudomonadota</taxon>
        <taxon>Gammaproteobacteria</taxon>
        <taxon>Enterobacterales</taxon>
        <taxon>Enterobacteriaceae</taxon>
        <taxon>Escherichia</taxon>
    </lineage>
</organism>
<reference key="1">
    <citation type="journal article" date="1990" name="J. Bacteriol.">
        <title>Partitioning of broad-host-range plasmid RP4 is a complex system involving site-specific recombination.</title>
        <authorList>
            <person name="Gerlitz M."/>
            <person name="Hrabak O."/>
            <person name="Schwab H."/>
        </authorList>
    </citation>
    <scope>NUCLEOTIDE SEQUENCE [GENOMIC DNA]</scope>
    <source>
        <plasmid>IncP-alpha RP4</plasmid>
    </source>
</reference>
<reference key="2">
    <citation type="journal article" date="1992" name="J. Bacteriol.">
        <title>Definition of a minimal plasmid stabilization system from the broad-host-range plasmid RK2.</title>
        <authorList>
            <person name="Roberts R.C."/>
            <person name="Helinski D.R."/>
        </authorList>
    </citation>
    <scope>NUCLEOTIDE SEQUENCE [GENOMIC DNA]</scope>
    <scope>FUNCTION IN PLASMID PARTITIONING</scope>
    <scope>DISRUPTION PHENOTYPE</scope>
    <source>
        <plasmid>IncP-alpha RK2</plasmid>
    </source>
</reference>
<reference key="3">
    <citation type="journal article" date="1994" name="J. Mol. Biol.">
        <title>The parDE operon of the broad-host-range plasmid RK2 specifies growth inhibition associated with plasmid loss.</title>
        <authorList>
            <person name="Roberts R.C."/>
            <person name="Strom A.R."/>
            <person name="Helinski D.R."/>
        </authorList>
    </citation>
    <scope>FUNCTION AS A TOXIN</scope>
</reference>
<reference key="4">
    <citation type="journal article" date="1996" name="J. Bacteriol.">
        <title>Plasmid RK2 toxin protein ParE: purification and interaction with the ParD antitoxin protein.</title>
        <authorList>
            <person name="Johnson E.P."/>
            <person name="Strom A.R."/>
            <person name="Helinski D.R."/>
        </authorList>
    </citation>
    <scope>FUNCTION AS A TOXIN</scope>
    <scope>SUBUNIT</scope>
    <scope>INTERACTION WITH PARD</scope>
    <source>
        <plasmid>IncP-alpha RK2</plasmid>
    </source>
</reference>
<reference key="5">
    <citation type="journal article" date="2002" name="Mol. Microbiol.">
        <title>ParE toxin encoded by the broad-host-range plasmid RK2 is an inhibitor of Escherichia coli gyrase.</title>
        <authorList>
            <person name="Jiang Y."/>
            <person name="Pogliano J."/>
            <person name="Helinski D.R."/>
            <person name="Konieczny I."/>
        </authorList>
    </citation>
    <scope>FUNCTION AS A DNA GYRASE INHIBITOR</scope>
    <source>
        <plasmid>IncP-alpha RK2</plasmid>
    </source>
</reference>
<protein>
    <recommendedName>
        <fullName>Toxin ParE</fullName>
    </recommendedName>
    <alternativeName>
        <fullName>Gyrase inhibitor ParE</fullName>
    </alternativeName>
</protein>
<dbReference type="EMBL" id="L05507">
    <property type="protein sequence ID" value="AAA92775.1"/>
    <property type="molecule type" value="Genomic_DNA"/>
</dbReference>
<dbReference type="RefSeq" id="WP_011205808.1">
    <property type="nucleotide sequence ID" value="NZ_VMTS01000064.1"/>
</dbReference>
<dbReference type="SMR" id="Q79EC5"/>
<dbReference type="BindingDB" id="Q79EC5"/>
<dbReference type="ChEMBL" id="CHEMBL3313836"/>
<dbReference type="GO" id="GO:0008657">
    <property type="term" value="F:DNA topoisomerase type II (double strand cut, ATP-hydrolyzing) inhibitor activity"/>
    <property type="evidence" value="ECO:0000314"/>
    <property type="project" value="UniProtKB"/>
</dbReference>
<dbReference type="GO" id="GO:0042803">
    <property type="term" value="F:protein homodimerization activity"/>
    <property type="evidence" value="ECO:0000314"/>
    <property type="project" value="UniProtKB"/>
</dbReference>
<dbReference type="GO" id="GO:0030541">
    <property type="term" value="P:plasmid partitioning"/>
    <property type="evidence" value="ECO:0000316"/>
    <property type="project" value="UniProtKB"/>
</dbReference>
<dbReference type="GO" id="GO:0051290">
    <property type="term" value="P:protein heterotetramerization"/>
    <property type="evidence" value="ECO:0000314"/>
    <property type="project" value="UniProtKB"/>
</dbReference>
<dbReference type="Gene3D" id="3.30.2310.20">
    <property type="entry name" value="RelE-like"/>
    <property type="match status" value="1"/>
</dbReference>
<dbReference type="InterPro" id="IPR007712">
    <property type="entry name" value="RelE/ParE_toxin"/>
</dbReference>
<dbReference type="InterPro" id="IPR035093">
    <property type="entry name" value="RelE/ParE_toxin_dom_sf"/>
</dbReference>
<dbReference type="Pfam" id="PF05016">
    <property type="entry name" value="ParE_toxin"/>
    <property type="match status" value="1"/>
</dbReference>
<accession>Q79EC5</accession>
<proteinExistence type="evidence at protein level"/>
<name>PARE_ECOLX</name>
<gene>
    <name type="primary">parE</name>
</gene>